<protein>
    <recommendedName>
        <fullName>Uncharacterized protein YcbJ</fullName>
    </recommendedName>
</protein>
<name>YCBJ_SHIFL</name>
<feature type="chain" id="PRO_0000168772" description="Uncharacterized protein YcbJ">
    <location>
        <begin position="1"/>
        <end position="297"/>
    </location>
</feature>
<sequence>MEQLRAELSHLLGEKLSRIECVNEKADTALWALYDSQGNPMPLMARSFSTPGKARQLAWKTTMLARSGTVRMPTIYGVMTHEEHPGPDVLLLERMRGVSVEAPARTPERWEQLKDQIVEALLAWHRQDSRGCVGAVDNTQENFWPSWYRQHVEVLWTTLNQFNNTGLTMQDKRILFRTRECLPALFEGFNDNCVLIHGNFCLRSMLKDSRSDQLLAMVGPGLMLWAPREYELFRLMDNSLAEDLLWSYLQRAPVAESFIWRRWLYVLWDEVAQLVNTGRFSRRNFDLASKSLLPWLA</sequence>
<accession>P0AB05</accession>
<accession>P75845</accession>
<accession>Q47327</accession>
<dbReference type="EMBL" id="AE005674">
    <property type="protein sequence ID" value="AAN42544.1"/>
    <property type="molecule type" value="Genomic_DNA"/>
</dbReference>
<dbReference type="EMBL" id="AE014073">
    <property type="protein sequence ID" value="AAP16430.1"/>
    <property type="molecule type" value="Genomic_DNA"/>
</dbReference>
<dbReference type="RefSeq" id="NP_706837.1">
    <property type="nucleotide sequence ID" value="NC_004337.2"/>
</dbReference>
<dbReference type="RefSeq" id="WP_000436922.1">
    <property type="nucleotide sequence ID" value="NZ_WPGW01000072.1"/>
</dbReference>
<dbReference type="SMR" id="P0AB05"/>
<dbReference type="STRING" id="198214.SF0915"/>
<dbReference type="PaxDb" id="198214-SF0915"/>
<dbReference type="GeneID" id="1023859"/>
<dbReference type="KEGG" id="sfl:SF0915"/>
<dbReference type="KEGG" id="sfx:S0979"/>
<dbReference type="PATRIC" id="fig|198214.7.peg.1066"/>
<dbReference type="HOGENOM" id="CLU_080412_0_0_6"/>
<dbReference type="Proteomes" id="UP000001006">
    <property type="component" value="Chromosome"/>
</dbReference>
<dbReference type="Proteomes" id="UP000002673">
    <property type="component" value="Chromosome"/>
</dbReference>
<dbReference type="InterPro" id="IPR002575">
    <property type="entry name" value="Aminoglycoside_PTrfase"/>
</dbReference>
<dbReference type="InterPro" id="IPR011009">
    <property type="entry name" value="Kinase-like_dom_sf"/>
</dbReference>
<dbReference type="NCBIfam" id="NF007890">
    <property type="entry name" value="PRK10593.1"/>
    <property type="match status" value="1"/>
</dbReference>
<dbReference type="Pfam" id="PF01636">
    <property type="entry name" value="APH"/>
    <property type="match status" value="1"/>
</dbReference>
<dbReference type="SUPFAM" id="SSF56112">
    <property type="entry name" value="Protein kinase-like (PK-like)"/>
    <property type="match status" value="1"/>
</dbReference>
<proteinExistence type="predicted"/>
<keyword id="KW-1185">Reference proteome</keyword>
<gene>
    <name type="primary">ycbJ</name>
    <name type="ordered locus">SF0915</name>
    <name type="ordered locus">S0979</name>
</gene>
<reference key="1">
    <citation type="journal article" date="2002" name="Nucleic Acids Res.">
        <title>Genome sequence of Shigella flexneri 2a: insights into pathogenicity through comparison with genomes of Escherichia coli K12 and O157.</title>
        <authorList>
            <person name="Jin Q."/>
            <person name="Yuan Z."/>
            <person name="Xu J."/>
            <person name="Wang Y."/>
            <person name="Shen Y."/>
            <person name="Lu W."/>
            <person name="Wang J."/>
            <person name="Liu H."/>
            <person name="Yang J."/>
            <person name="Yang F."/>
            <person name="Zhang X."/>
            <person name="Zhang J."/>
            <person name="Yang G."/>
            <person name="Wu H."/>
            <person name="Qu D."/>
            <person name="Dong J."/>
            <person name="Sun L."/>
            <person name="Xue Y."/>
            <person name="Zhao A."/>
            <person name="Gao Y."/>
            <person name="Zhu J."/>
            <person name="Kan B."/>
            <person name="Ding K."/>
            <person name="Chen S."/>
            <person name="Cheng H."/>
            <person name="Yao Z."/>
            <person name="He B."/>
            <person name="Chen R."/>
            <person name="Ma D."/>
            <person name="Qiang B."/>
            <person name="Wen Y."/>
            <person name="Hou Y."/>
            <person name="Yu J."/>
        </authorList>
    </citation>
    <scope>NUCLEOTIDE SEQUENCE [LARGE SCALE GENOMIC DNA]</scope>
    <source>
        <strain>301 / Serotype 2a</strain>
    </source>
</reference>
<reference key="2">
    <citation type="journal article" date="2003" name="Infect. Immun.">
        <title>Complete genome sequence and comparative genomics of Shigella flexneri serotype 2a strain 2457T.</title>
        <authorList>
            <person name="Wei J."/>
            <person name="Goldberg M.B."/>
            <person name="Burland V."/>
            <person name="Venkatesan M.M."/>
            <person name="Deng W."/>
            <person name="Fournier G."/>
            <person name="Mayhew G.F."/>
            <person name="Plunkett G. III"/>
            <person name="Rose D.J."/>
            <person name="Darling A."/>
            <person name="Mau B."/>
            <person name="Perna N.T."/>
            <person name="Payne S.M."/>
            <person name="Runyen-Janecky L.J."/>
            <person name="Zhou S."/>
            <person name="Schwartz D.C."/>
            <person name="Blattner F.R."/>
        </authorList>
    </citation>
    <scope>NUCLEOTIDE SEQUENCE [LARGE SCALE GENOMIC DNA]</scope>
    <source>
        <strain>ATCC 700930 / 2457T / Serotype 2a</strain>
    </source>
</reference>
<organism>
    <name type="scientific">Shigella flexneri</name>
    <dbReference type="NCBI Taxonomy" id="623"/>
    <lineage>
        <taxon>Bacteria</taxon>
        <taxon>Pseudomonadati</taxon>
        <taxon>Pseudomonadota</taxon>
        <taxon>Gammaproteobacteria</taxon>
        <taxon>Enterobacterales</taxon>
        <taxon>Enterobacteriaceae</taxon>
        <taxon>Shigella</taxon>
    </lineage>
</organism>